<protein>
    <recommendedName>
        <fullName evidence="1">Phosphoglycerate kinase</fullName>
        <ecNumber evidence="1">2.7.2.3</ecNumber>
    </recommendedName>
</protein>
<keyword id="KW-0067">ATP-binding</keyword>
<keyword id="KW-0963">Cytoplasm</keyword>
<keyword id="KW-0324">Glycolysis</keyword>
<keyword id="KW-0418">Kinase</keyword>
<keyword id="KW-0547">Nucleotide-binding</keyword>
<keyword id="KW-0808">Transferase</keyword>
<reference key="1">
    <citation type="journal article" date="2005" name="J. Bacteriol.">
        <title>Genomic sequence of an otitis media isolate of nontypeable Haemophilus influenzae: comparative study with H. influenzae serotype d, strain KW20.</title>
        <authorList>
            <person name="Harrison A."/>
            <person name="Dyer D.W."/>
            <person name="Gillaspy A."/>
            <person name="Ray W.C."/>
            <person name="Mungur R."/>
            <person name="Carson M.B."/>
            <person name="Zhong H."/>
            <person name="Gipson J."/>
            <person name="Gipson M."/>
            <person name="Johnson L.S."/>
            <person name="Lewis L."/>
            <person name="Bakaletz L.O."/>
            <person name="Munson R.S. Jr."/>
        </authorList>
    </citation>
    <scope>NUCLEOTIDE SEQUENCE [LARGE SCALE GENOMIC DNA]</scope>
    <source>
        <strain>86-028NP</strain>
    </source>
</reference>
<comment type="catalytic activity">
    <reaction evidence="1">
        <text>(2R)-3-phosphoglycerate + ATP = (2R)-3-phospho-glyceroyl phosphate + ADP</text>
        <dbReference type="Rhea" id="RHEA:14801"/>
        <dbReference type="ChEBI" id="CHEBI:30616"/>
        <dbReference type="ChEBI" id="CHEBI:57604"/>
        <dbReference type="ChEBI" id="CHEBI:58272"/>
        <dbReference type="ChEBI" id="CHEBI:456216"/>
        <dbReference type="EC" id="2.7.2.3"/>
    </reaction>
</comment>
<comment type="pathway">
    <text evidence="1">Carbohydrate degradation; glycolysis; pyruvate from D-glyceraldehyde 3-phosphate: step 2/5.</text>
</comment>
<comment type="subunit">
    <text evidence="1">Monomer.</text>
</comment>
<comment type="subcellular location">
    <subcellularLocation>
        <location evidence="1">Cytoplasm</location>
    </subcellularLocation>
</comment>
<comment type="similarity">
    <text evidence="1">Belongs to the phosphoglycerate kinase family.</text>
</comment>
<dbReference type="EC" id="2.7.2.3" evidence="1"/>
<dbReference type="EMBL" id="CP000057">
    <property type="protein sequence ID" value="AAX87574.1"/>
    <property type="molecule type" value="Genomic_DNA"/>
</dbReference>
<dbReference type="RefSeq" id="WP_011272099.1">
    <property type="nucleotide sequence ID" value="NC_007146.2"/>
</dbReference>
<dbReference type="SMR" id="Q4QN23"/>
<dbReference type="GeneID" id="93219534"/>
<dbReference type="KEGG" id="hit:NTHI0651"/>
<dbReference type="HOGENOM" id="CLU_025427_0_2_6"/>
<dbReference type="UniPathway" id="UPA00109">
    <property type="reaction ID" value="UER00185"/>
</dbReference>
<dbReference type="Proteomes" id="UP000002525">
    <property type="component" value="Chromosome"/>
</dbReference>
<dbReference type="GO" id="GO:0005829">
    <property type="term" value="C:cytosol"/>
    <property type="evidence" value="ECO:0007669"/>
    <property type="project" value="TreeGrafter"/>
</dbReference>
<dbReference type="GO" id="GO:0043531">
    <property type="term" value="F:ADP binding"/>
    <property type="evidence" value="ECO:0007669"/>
    <property type="project" value="TreeGrafter"/>
</dbReference>
<dbReference type="GO" id="GO:0005524">
    <property type="term" value="F:ATP binding"/>
    <property type="evidence" value="ECO:0007669"/>
    <property type="project" value="UniProtKB-KW"/>
</dbReference>
<dbReference type="GO" id="GO:0004618">
    <property type="term" value="F:phosphoglycerate kinase activity"/>
    <property type="evidence" value="ECO:0007669"/>
    <property type="project" value="UniProtKB-UniRule"/>
</dbReference>
<dbReference type="GO" id="GO:0006094">
    <property type="term" value="P:gluconeogenesis"/>
    <property type="evidence" value="ECO:0007669"/>
    <property type="project" value="TreeGrafter"/>
</dbReference>
<dbReference type="GO" id="GO:0006096">
    <property type="term" value="P:glycolytic process"/>
    <property type="evidence" value="ECO:0007669"/>
    <property type="project" value="UniProtKB-UniRule"/>
</dbReference>
<dbReference type="FunFam" id="3.40.50.1260:FF:000001">
    <property type="entry name" value="Phosphoglycerate kinase"/>
    <property type="match status" value="1"/>
</dbReference>
<dbReference type="FunFam" id="3.40.50.1260:FF:000002">
    <property type="entry name" value="Phosphoglycerate kinase"/>
    <property type="match status" value="1"/>
</dbReference>
<dbReference type="Gene3D" id="3.40.50.1260">
    <property type="entry name" value="Phosphoglycerate kinase, N-terminal domain"/>
    <property type="match status" value="2"/>
</dbReference>
<dbReference type="HAMAP" id="MF_00145">
    <property type="entry name" value="Phosphoglyc_kinase"/>
    <property type="match status" value="1"/>
</dbReference>
<dbReference type="InterPro" id="IPR001576">
    <property type="entry name" value="Phosphoglycerate_kinase"/>
</dbReference>
<dbReference type="InterPro" id="IPR015911">
    <property type="entry name" value="Phosphoglycerate_kinase_CS"/>
</dbReference>
<dbReference type="InterPro" id="IPR015824">
    <property type="entry name" value="Phosphoglycerate_kinase_N"/>
</dbReference>
<dbReference type="InterPro" id="IPR036043">
    <property type="entry name" value="Phosphoglycerate_kinase_sf"/>
</dbReference>
<dbReference type="PANTHER" id="PTHR11406">
    <property type="entry name" value="PHOSPHOGLYCERATE KINASE"/>
    <property type="match status" value="1"/>
</dbReference>
<dbReference type="PANTHER" id="PTHR11406:SF23">
    <property type="entry name" value="PHOSPHOGLYCERATE KINASE 1, CHLOROPLASTIC-RELATED"/>
    <property type="match status" value="1"/>
</dbReference>
<dbReference type="Pfam" id="PF00162">
    <property type="entry name" value="PGK"/>
    <property type="match status" value="1"/>
</dbReference>
<dbReference type="PIRSF" id="PIRSF000724">
    <property type="entry name" value="Pgk"/>
    <property type="match status" value="1"/>
</dbReference>
<dbReference type="PRINTS" id="PR00477">
    <property type="entry name" value="PHGLYCKINASE"/>
</dbReference>
<dbReference type="SUPFAM" id="SSF53748">
    <property type="entry name" value="Phosphoglycerate kinase"/>
    <property type="match status" value="1"/>
</dbReference>
<dbReference type="PROSITE" id="PS00111">
    <property type="entry name" value="PGLYCERATE_KINASE"/>
    <property type="match status" value="1"/>
</dbReference>
<feature type="chain" id="PRO_1000057999" description="Phosphoglycerate kinase">
    <location>
        <begin position="1"/>
        <end position="386"/>
    </location>
</feature>
<feature type="binding site" evidence="1">
    <location>
        <begin position="21"/>
        <end position="23"/>
    </location>
    <ligand>
        <name>substrate</name>
    </ligand>
</feature>
<feature type="binding site" evidence="1">
    <location>
        <position position="36"/>
    </location>
    <ligand>
        <name>substrate</name>
    </ligand>
</feature>
<feature type="binding site" evidence="1">
    <location>
        <begin position="59"/>
        <end position="62"/>
    </location>
    <ligand>
        <name>substrate</name>
    </ligand>
</feature>
<feature type="binding site" evidence="1">
    <location>
        <position position="112"/>
    </location>
    <ligand>
        <name>substrate</name>
    </ligand>
</feature>
<feature type="binding site" evidence="1">
    <location>
        <position position="145"/>
    </location>
    <ligand>
        <name>substrate</name>
    </ligand>
</feature>
<feature type="binding site" evidence="1">
    <location>
        <position position="196"/>
    </location>
    <ligand>
        <name>ATP</name>
        <dbReference type="ChEBI" id="CHEBI:30616"/>
    </ligand>
</feature>
<feature type="binding site" evidence="1">
    <location>
        <position position="313"/>
    </location>
    <ligand>
        <name>ATP</name>
        <dbReference type="ChEBI" id="CHEBI:30616"/>
    </ligand>
</feature>
<feature type="binding site" evidence="1">
    <location>
        <begin position="339"/>
        <end position="342"/>
    </location>
    <ligand>
        <name>ATP</name>
        <dbReference type="ChEBI" id="CHEBI:30616"/>
    </ligand>
</feature>
<sequence length="386" mass="40960">MSVIKMTDLDLAGKRVFIRADLNVPVKDGKVTSDARIRATIPTLKLALEKGAKVMVTSHLGRPTEGEFTPEDSLQPVVDYLKNAGFNVRLEQDYLNGVDVKDGEIVVLENVRINKGEKKNDPELGKKYAALCDVFVMDAFGTAHRAQASTYGVAEFAPIACAGPLLAAELDALGKALKEPARPMVAIVGGSKVSTKLEVLNSLSKIADQIIVGGGIANTFIAAAGHNVGKSLYEADLMPVAKELAANTDIPVPVDVRVGLEFSETAAATEKAVNEVKDDESIFDIGDKSAEQLAEIIKNAKTVLWNGPVGVFEFPHFRKGTEIISHAIANSDAFSIAGGGDTLAAIDLFGIADKISYISTGGGAFLEFVEGKVLPAVEILEKRAKN</sequence>
<accession>Q4QN23</accession>
<name>PGK_HAEI8</name>
<gene>
    <name evidence="1" type="primary">pgk</name>
    <name type="ordered locus">NTHI0651</name>
</gene>
<proteinExistence type="inferred from homology"/>
<organism>
    <name type="scientific">Haemophilus influenzae (strain 86-028NP)</name>
    <dbReference type="NCBI Taxonomy" id="281310"/>
    <lineage>
        <taxon>Bacteria</taxon>
        <taxon>Pseudomonadati</taxon>
        <taxon>Pseudomonadota</taxon>
        <taxon>Gammaproteobacteria</taxon>
        <taxon>Pasteurellales</taxon>
        <taxon>Pasteurellaceae</taxon>
        <taxon>Haemophilus</taxon>
    </lineage>
</organism>
<evidence type="ECO:0000255" key="1">
    <source>
        <dbReference type="HAMAP-Rule" id="MF_00145"/>
    </source>
</evidence>